<sequence>MEDNNMLPQFIHGILSTSHSLFTRSIQELDEGATTPYDYDDGEPCHKTSVKQIGAWILPPLYSLVFIFGFVGNMLVIIILIGCKKLKSMTDIYLLNLAISDLLFLLTLPFWAHYAANEWVFGNIMCKVFTGLYHIGYFGGIFFIILLTIDRYLAIVHAVFALKARTVTFGVITSVVTWVVAVFASLPGIIFTKSKQDDHHYTCGPYFTQLWKNFQTIMRNILSLILPLLVMVICYSGILHTLFRCRNEKKRHRAVRLIFAIMIVYFLFWTPYNIVLFLTTFQESLGMSNCVIDKHLDQAMQVTETLGMTHCCINPVIYAFVGEKFRRYLSIFFRKHIAKRLCKQCPVFYRETADRVSSTFTPSTGEQEVSVGL</sequence>
<gene>
    <name type="primary">Ccr2</name>
    <name type="synonym">Cmkbr2</name>
</gene>
<name>CCR2_MOUSE</name>
<organism>
    <name type="scientific">Mus musculus</name>
    <name type="common">Mouse</name>
    <dbReference type="NCBI Taxonomy" id="10090"/>
    <lineage>
        <taxon>Eukaryota</taxon>
        <taxon>Metazoa</taxon>
        <taxon>Chordata</taxon>
        <taxon>Craniata</taxon>
        <taxon>Vertebrata</taxon>
        <taxon>Euteleostomi</taxon>
        <taxon>Mammalia</taxon>
        <taxon>Eutheria</taxon>
        <taxon>Euarchontoglires</taxon>
        <taxon>Glires</taxon>
        <taxon>Rodentia</taxon>
        <taxon>Myomorpha</taxon>
        <taxon>Muroidea</taxon>
        <taxon>Muridae</taxon>
        <taxon>Murinae</taxon>
        <taxon>Mus</taxon>
        <taxon>Mus</taxon>
    </lineage>
</organism>
<proteinExistence type="evidence at protein level"/>
<keyword id="KW-1003">Cell membrane</keyword>
<keyword id="KW-1015">Disulfide bond</keyword>
<keyword id="KW-0297">G-protein coupled receptor</keyword>
<keyword id="KW-0325">Glycoprotein</keyword>
<keyword id="KW-0395">Inflammatory response</keyword>
<keyword id="KW-0472">Membrane</keyword>
<keyword id="KW-0597">Phosphoprotein</keyword>
<keyword id="KW-0675">Receptor</keyword>
<keyword id="KW-1185">Reference proteome</keyword>
<keyword id="KW-0807">Transducer</keyword>
<keyword id="KW-0812">Transmembrane</keyword>
<keyword id="KW-1133">Transmembrane helix</keyword>
<comment type="function">
    <text evidence="1 4 5 6 7 8 9 10 11">Key functional receptor for CCL2 but can also bind CCL7 and CCL12 chemokines (PubMed:8631787, PubMed:8662823, PubMed:8996246). Its binding with CCL2 on monocytes and macrophages mediates chemotaxis and migration induction through the activation of the PI3K cascade, the small G protein Rac and lamellipodium protrusion (By similarity). Also acts as a receptor for the beta-defensin DEFB106A/DEFB106B (By similarity). Regulates the expression of T-cell inflammatory cytokines and T-cell differentiation, promoting the differentiation of T-cells into T-helper 17 cells (Th17) during inflammation (PubMed:28507030). Facilitates the export of mature thymocytes by enhancing directional movement of thymocytes to sphingosine-1-phosphate stimulation and up-regulation of S1P1R expression; signals through the JAK-STAT pathway to regulate FOXO1 activity leading to an increased expression of S1P1R (PubMed:29930553). Plays an important role in mediating peripheral nerve injury-induced neuropathic pain (PubMed:29993042). Increases NMDA-mediated synaptic transmission in both dopamine D1 and D2 receptor-containing neurons, which may be caused by MAPK/ERK-dependent phosphorylation of GRIN2B/NMDAR2B (PubMed:29993042). Mediates the recruitment of macrophages and monocytes to the injury site following brain injury (PubMed:24806994, PubMed:29632244).</text>
</comment>
<comment type="subunit">
    <text evidence="1">Interacts with ARRB1 (By similarity). Interacts (via extracellular N-terminal region) with beta-defensin DEFB106A/DEFB106B; this interaction may preferentially require specific tyrosine sulfation on CCR2 (By similarity). Interacts with NUP85; the interaction is required for CCR2 clusters formation on the cell membrane and CCR2 signaling (By similarity).</text>
</comment>
<comment type="subcellular location">
    <subcellularLocation>
        <location evidence="11">Cell membrane</location>
        <topology evidence="2">Multi-pass membrane protein</topology>
    </subcellularLocation>
    <text evidence="1">The chemoattractant receptors are reportedly distributed throughout the cell surface; after stimulation with a ligand, such as CCL2, they are rapidly recruited into microdomain clusters at the cell membrane.</text>
</comment>
<comment type="tissue specificity">
    <text evidence="7 9">Epressed in mature thymocytes (PubMed:29930553). Detected in monocyte/macrophage cell lines, but not in nonhematopoietic cell lines (PubMed:8631787).</text>
</comment>
<comment type="induction">
    <text evidence="8">Up-regulated in the dopamine D1 and D2 receptor-containing neurons of nucleus accumbens shell after spinal nerve ligation.</text>
</comment>
<comment type="PTM">
    <text evidence="1">N-glycosylated.</text>
</comment>
<comment type="PTM">
    <text evidence="1">Sulfation increases the affinity for both monomeric and dimeric CCL2 with stronger binding to the monomeric form (By similarity). Binding of sulfated CCR2 to CCL2 promotes conversion of CCL2 from dimer to monomer (By similarity).</text>
</comment>
<comment type="disruption phenotype">
    <text evidence="4 6 7">Following a stab wound brain injury, mice show reduced extracellular matrix deposition at the injured gray matter and reduced astroglial scar in the cerebral cortex (PubMed:29632244). The injury site shows an absence of invading monocytes, significantly increased astrocyte proliferation and a decrease in extracellular matrix synthesizing enzymes (PubMed:29632244). Following traumatic brain injury, mice exhibit markedly reduced early macrophage infiltration, improved locomotor activity, improved spatial learning and memory retention and increased neuronal density in the CA1-CA3 regions of the hippocampus (PubMed:24806994). Mice show impaired thymic emigration with a concomitant accumulation of mature thymocytes in the thymus (PubMed:29930553).</text>
</comment>
<comment type="similarity">
    <text evidence="3">Belongs to the G-protein coupled receptor 1 family.</text>
</comment>
<protein>
    <recommendedName>
        <fullName>C-C chemokine receptor type 2</fullName>
        <shortName>C-C CKR-2</shortName>
        <shortName>CC-CKR-2</shortName>
        <shortName>CCR-2</shortName>
        <shortName>CCR2</shortName>
    </recommendedName>
    <alternativeName>
        <fullName>JE/FIC receptor</fullName>
    </alternativeName>
    <alternativeName>
        <fullName>MCP-1 receptor</fullName>
    </alternativeName>
    <cdAntigenName>CD192</cdAntigenName>
</protein>
<reference key="1">
    <citation type="journal article" date="1996" name="J. Biol. Chem.">
        <title>Molecular cloning and functional expression of murine JE (monocyte chemoattractant protein 1) and murine macrophage inflammatory protein 1alpha receptors: evidence for two closely linked C-C chemokine receptors on chromosome 9.</title>
        <authorList>
            <person name="Boring L."/>
            <person name="Gosling J."/>
            <person name="Monteclaro F.S."/>
            <person name="Lusis A.J."/>
            <person name="Tsou C.-L."/>
            <person name="Charo I.F."/>
        </authorList>
    </citation>
    <scope>NUCLEOTIDE SEQUENCE [MRNA]</scope>
    <scope>FUNCTION</scope>
    <scope>TISSUE SPECIFICITY</scope>
</reference>
<reference key="2">
    <citation type="journal article" date="1996" name="J. Biol. Chem.">
        <title>Cloning and functional expression of mCCR2, a murine receptor for the C-C chemokines JE and FIC.</title>
        <authorList>
            <person name="Kurihara T."/>
            <person name="Bravo R."/>
        </authorList>
    </citation>
    <scope>NUCLEOTIDE SEQUENCE [MRNA]</scope>
    <scope>FUNCTION</scope>
    <source>
        <strain>BALB/cJ</strain>
    </source>
</reference>
<reference key="3">
    <citation type="journal article" date="1996" name="J. Neurosci. Res.">
        <title>Mouse astrocytes respond to the chemokines MCP-1 and KC, but reverse transcriptase-polymerase chain reaction does not detect mRNA for the KC or new MCP-1 receptor.</title>
        <authorList>
            <person name="Heesen M."/>
            <person name="Tanabe S."/>
            <person name="Berman M.A."/>
            <person name="Yoshizawa I."/>
            <person name="Luo Y."/>
            <person name="Kim R."/>
            <person name="Post T.W."/>
            <person name="Gerard C."/>
            <person name="Dorf M.E."/>
        </authorList>
    </citation>
    <scope>NUCLEOTIDE SEQUENCE [MRNA]</scope>
</reference>
<reference key="4">
    <citation type="journal article" date="1997" name="J. Exp. Med.">
        <title>Murine monocyte chemoattractant protein (MCP)-5: a novel CC chemokine that is a structural and functional homologue of human MCP-1.</title>
        <authorList>
            <person name="Sarafi M.N."/>
            <person name="Garcia-Zepeda E.A."/>
            <person name="MacLean J.A."/>
            <person name="Charo I.F."/>
            <person name="Luster A.D."/>
        </authorList>
    </citation>
    <scope>FUNCTION AS CCL12 RECEPTOR</scope>
    <scope>SUBCELLULAR LOCATION</scope>
</reference>
<reference key="5">
    <citation type="journal article" date="2014" name="J. Neurotrauma">
        <title>CCR2 deficiency impairs macrophage infiltration and improves cognitive function after traumatic brain injury.</title>
        <authorList>
            <person name="Hsieh C.L."/>
            <person name="Niemi E.C."/>
            <person name="Wang S.H."/>
            <person name="Lee C.C."/>
            <person name="Bingham D."/>
            <person name="Zhang J."/>
            <person name="Cozen M.L."/>
            <person name="Charo I."/>
            <person name="Huang E.J."/>
            <person name="Liu J."/>
            <person name="Nakamura M.C."/>
        </authorList>
    </citation>
    <scope>FUNCTION</scope>
    <scope>DISRUPTION PHENOTYPE</scope>
</reference>
<reference key="6">
    <citation type="journal article" date="2017" name="J. Immunol.">
        <title>CCR2 regulates the immune response by modulating the interconversion and function of effector and regulatory T cells.</title>
        <authorList>
            <person name="Bakos E."/>
            <person name="Thaiss C.A."/>
            <person name="Kramer M.P."/>
            <person name="Cohen S."/>
            <person name="Radomir L."/>
            <person name="Orr I."/>
            <person name="Kaushansky N."/>
            <person name="Ben-Nun A."/>
            <person name="Becker-Herman S."/>
            <person name="Shachar I."/>
        </authorList>
    </citation>
    <scope>FUNCTION</scope>
</reference>
<reference key="7">
    <citation type="journal article" date="2018" name="EMBO Rep.">
        <title>Cross-talk between monocyte invasion and astrocyte proliferation regulates scarring in brain injury.</title>
        <authorList>
            <person name="Frik J."/>
            <person name="Merl-Pham J."/>
            <person name="Plesnila N."/>
            <person name="Mattugini N."/>
            <person name="Kjell J."/>
            <person name="Kraska J."/>
            <person name="Gomez R.M."/>
            <person name="Hauck S.M."/>
            <person name="Sirko S."/>
            <person name="Goetz M."/>
        </authorList>
    </citation>
    <scope>FUNCTION</scope>
    <scope>DISRUPTION PHENOTYPE</scope>
</reference>
<reference key="8">
    <citation type="journal article" date="2018" name="Front. Immunol.">
        <title>CCR2 signal facilitates thymic egress by priming thymocyte responses to sphingosine-1-phosphate.</title>
        <authorList>
            <person name="Aili A."/>
            <person name="Zhang J."/>
            <person name="Wu J."/>
            <person name="Wu H."/>
            <person name="Sun X."/>
            <person name="He Q."/>
            <person name="Jin R."/>
            <person name="Zhang Y."/>
        </authorList>
    </citation>
    <scope>FUNCTION</scope>
    <scope>TISSUE SPECIFICITY</scope>
    <scope>DISRUPTION PHENOTYPE</scope>
</reference>
<reference key="9">
    <citation type="journal article" date="2018" name="Neuropsychopharmacology">
        <title>Chemokine receptor CCR2 contributes to neuropathic pain and the associated depression via increasing NR2B-mediated currents in both D1 and D2 dopamine receptor-containing medium spiny neurons in the nucleus accumbens shell.</title>
        <authorList>
            <person name="Wu X.B."/>
            <person name="Jing P.B."/>
            <person name="Zhang Z.J."/>
            <person name="Cao D.L."/>
            <person name="Gao M.H."/>
            <person name="Jiang B.C."/>
            <person name="Gao Y.J."/>
        </authorList>
    </citation>
    <scope>FUNCTION</scope>
    <scope>INDUCTION</scope>
</reference>
<evidence type="ECO:0000250" key="1">
    <source>
        <dbReference type="UniProtKB" id="P41597"/>
    </source>
</evidence>
<evidence type="ECO:0000255" key="2"/>
<evidence type="ECO:0000255" key="3">
    <source>
        <dbReference type="PROSITE-ProRule" id="PRU00521"/>
    </source>
</evidence>
<evidence type="ECO:0000269" key="4">
    <source>
    </source>
</evidence>
<evidence type="ECO:0000269" key="5">
    <source>
    </source>
</evidence>
<evidence type="ECO:0000269" key="6">
    <source>
    </source>
</evidence>
<evidence type="ECO:0000269" key="7">
    <source>
    </source>
</evidence>
<evidence type="ECO:0000269" key="8">
    <source>
    </source>
</evidence>
<evidence type="ECO:0000269" key="9">
    <source>
    </source>
</evidence>
<evidence type="ECO:0000269" key="10">
    <source>
    </source>
</evidence>
<evidence type="ECO:0000269" key="11">
    <source>
    </source>
</evidence>
<evidence type="ECO:0000305" key="12"/>
<feature type="chain" id="PRO_0000069234" description="C-C chemokine receptor type 2">
    <location>
        <begin position="1"/>
        <end position="373"/>
    </location>
</feature>
<feature type="topological domain" description="Extracellular" evidence="2">
    <location>
        <begin position="1"/>
        <end position="55"/>
    </location>
</feature>
<feature type="transmembrane region" description="Helical; Name=1" evidence="2">
    <location>
        <begin position="56"/>
        <end position="83"/>
    </location>
</feature>
<feature type="topological domain" description="Cytoplasmic" evidence="2">
    <location>
        <begin position="84"/>
        <end position="93"/>
    </location>
</feature>
<feature type="transmembrane region" description="Helical; Name=2" evidence="2">
    <location>
        <begin position="94"/>
        <end position="114"/>
    </location>
</feature>
<feature type="topological domain" description="Extracellular" evidence="2">
    <location>
        <begin position="115"/>
        <end position="127"/>
    </location>
</feature>
<feature type="transmembrane region" description="Helical; Name=3" evidence="2">
    <location>
        <begin position="128"/>
        <end position="149"/>
    </location>
</feature>
<feature type="topological domain" description="Cytoplasmic" evidence="2">
    <location>
        <begin position="150"/>
        <end position="166"/>
    </location>
</feature>
<feature type="transmembrane region" description="Helical; Name=4" evidence="2">
    <location>
        <begin position="167"/>
        <end position="191"/>
    </location>
</feature>
<feature type="topological domain" description="Extracellular" evidence="2">
    <location>
        <begin position="192"/>
        <end position="219"/>
    </location>
</feature>
<feature type="transmembrane region" description="Helical; Name=5" evidence="2">
    <location>
        <begin position="220"/>
        <end position="239"/>
    </location>
</feature>
<feature type="topological domain" description="Cytoplasmic" evidence="2">
    <location>
        <begin position="240"/>
        <end position="256"/>
    </location>
</feature>
<feature type="transmembrane region" description="Helical; Name=6" evidence="2">
    <location>
        <begin position="257"/>
        <end position="281"/>
    </location>
</feature>
<feature type="topological domain" description="Extracellular" evidence="2">
    <location>
        <begin position="282"/>
        <end position="298"/>
    </location>
</feature>
<feature type="transmembrane region" description="Helical; Name=7" evidence="2">
    <location>
        <begin position="299"/>
        <end position="322"/>
    </location>
</feature>
<feature type="topological domain" description="Cytoplasmic" evidence="2">
    <location>
        <begin position="323"/>
        <end position="373"/>
    </location>
</feature>
<feature type="modified residue" description="Phosphotyrosine; by JAK2" evidence="1">
    <location>
        <position position="152"/>
    </location>
</feature>
<feature type="disulfide bond" evidence="3">
    <location>
        <begin position="126"/>
        <end position="203"/>
    </location>
</feature>
<feature type="sequence conflict" description="In Ref. 1; AAC52453." evidence="12" ref="1">
    <original>Y</original>
    <variation>H</variation>
    <location>
        <position position="39"/>
    </location>
</feature>
<feature type="sequence conflict" description="In Ref. 1; AAC52453." evidence="12" ref="1">
    <original>A</original>
    <variation>G</variation>
    <location>
        <position position="184"/>
    </location>
</feature>
<feature type="sequence conflict" description="In Ref. 1; AAC52453." evidence="12" ref="1">
    <original>V</original>
    <variation>G</variation>
    <location>
        <position position="264"/>
    </location>
</feature>
<accession>P51683</accession>
<accession>Q61172</accession>
<dbReference type="EMBL" id="U47035">
    <property type="protein sequence ID" value="AAC52453.1"/>
    <property type="molecule type" value="mRNA"/>
</dbReference>
<dbReference type="EMBL" id="U51717">
    <property type="protein sequence ID" value="AAC52557.1"/>
    <property type="molecule type" value="mRNA"/>
</dbReference>
<dbReference type="EMBL" id="U56819">
    <property type="protein sequence ID" value="AAC52784.1"/>
    <property type="molecule type" value="mRNA"/>
</dbReference>
<dbReference type="CCDS" id="CCDS23669.1"/>
<dbReference type="RefSeq" id="NP_034045.1">
    <property type="nucleotide sequence ID" value="NM_009915.2"/>
</dbReference>
<dbReference type="RefSeq" id="XP_006512491.1">
    <property type="nucleotide sequence ID" value="XM_006512428.3"/>
</dbReference>
<dbReference type="RefSeq" id="XP_011241365.1">
    <property type="nucleotide sequence ID" value="XM_011243063.2"/>
</dbReference>
<dbReference type="RefSeq" id="XP_011241366.1">
    <property type="nucleotide sequence ID" value="XM_011243064.4"/>
</dbReference>
<dbReference type="RefSeq" id="XP_036010478.1">
    <property type="nucleotide sequence ID" value="XM_036154585.1"/>
</dbReference>
<dbReference type="RefSeq" id="XP_036010479.1">
    <property type="nucleotide sequence ID" value="XM_036154586.1"/>
</dbReference>
<dbReference type="RefSeq" id="XP_036010480.1">
    <property type="nucleotide sequence ID" value="XM_036154587.1"/>
</dbReference>
<dbReference type="SMR" id="P51683"/>
<dbReference type="BioGRID" id="198772">
    <property type="interactions" value="3"/>
</dbReference>
<dbReference type="FunCoup" id="P51683">
    <property type="interactions" value="572"/>
</dbReference>
<dbReference type="STRING" id="10090.ENSMUSP00000132453"/>
<dbReference type="BindingDB" id="P51683"/>
<dbReference type="ChEMBL" id="CHEMBL5412"/>
<dbReference type="GuidetoPHARMACOLOGY" id="59"/>
<dbReference type="iPTMnet" id="P51683"/>
<dbReference type="PhosphoSitePlus" id="P51683"/>
<dbReference type="PaxDb" id="10090-ENSMUSP00000132453"/>
<dbReference type="ProteomicsDB" id="281128"/>
<dbReference type="ABCD" id="P51683">
    <property type="antibodies" value="5 sequenced antibodies"/>
</dbReference>
<dbReference type="Antibodypedia" id="29661">
    <property type="antibodies" value="932 antibodies from 42 providers"/>
</dbReference>
<dbReference type="DNASU" id="12772"/>
<dbReference type="Ensembl" id="ENSMUST00000055918.7">
    <property type="protein sequence ID" value="ENSMUSP00000049909.7"/>
    <property type="gene ID" value="ENSMUSG00000049103.15"/>
</dbReference>
<dbReference type="Ensembl" id="ENSMUST00000165984.3">
    <property type="protein sequence ID" value="ENSMUSP00000128734.3"/>
    <property type="gene ID" value="ENSMUSG00000049103.15"/>
</dbReference>
<dbReference type="Ensembl" id="ENSMUST00000168841.3">
    <property type="protein sequence ID" value="ENSMUSP00000132453.2"/>
    <property type="gene ID" value="ENSMUSG00000049103.15"/>
</dbReference>
<dbReference type="Ensembl" id="ENSMUST00000171719.8">
    <property type="protein sequence ID" value="ENSMUSP00000130112.2"/>
    <property type="gene ID" value="ENSMUSG00000049103.15"/>
</dbReference>
<dbReference type="GeneID" id="12772"/>
<dbReference type="KEGG" id="mmu:12772"/>
<dbReference type="UCSC" id="uc009shc.1">
    <property type="organism name" value="mouse"/>
</dbReference>
<dbReference type="AGR" id="MGI:106185"/>
<dbReference type="CTD" id="729230"/>
<dbReference type="MGI" id="MGI:106185">
    <property type="gene designation" value="Ccr2"/>
</dbReference>
<dbReference type="VEuPathDB" id="HostDB:ENSMUSG00000049103"/>
<dbReference type="eggNOG" id="KOG3656">
    <property type="taxonomic scope" value="Eukaryota"/>
</dbReference>
<dbReference type="GeneTree" id="ENSGT01020000230359"/>
<dbReference type="HOGENOM" id="CLU_009579_8_3_1"/>
<dbReference type="InParanoid" id="P51683"/>
<dbReference type="OMA" id="YHIALGC"/>
<dbReference type="OrthoDB" id="9876908at2759"/>
<dbReference type="PhylomeDB" id="P51683"/>
<dbReference type="TreeFam" id="TF330966"/>
<dbReference type="BioGRID-ORCS" id="12772">
    <property type="hits" value="4 hits in 77 CRISPR screens"/>
</dbReference>
<dbReference type="ChiTaRS" id="Ccr2">
    <property type="organism name" value="mouse"/>
</dbReference>
<dbReference type="PRO" id="PR:P51683"/>
<dbReference type="Proteomes" id="UP000000589">
    <property type="component" value="Chromosome 9"/>
</dbReference>
<dbReference type="RNAct" id="P51683">
    <property type="molecule type" value="protein"/>
</dbReference>
<dbReference type="Bgee" id="ENSMUSG00000049103">
    <property type="expression patterns" value="Expressed in lumbar dorsal root ganglion and 106 other cell types or tissues"/>
</dbReference>
<dbReference type="ExpressionAtlas" id="P51683">
    <property type="expression patterns" value="baseline and differential"/>
</dbReference>
<dbReference type="GO" id="GO:0030425">
    <property type="term" value="C:dendrite"/>
    <property type="evidence" value="ECO:0000250"/>
    <property type="project" value="BHF-UCL"/>
</dbReference>
<dbReference type="GO" id="GO:0009897">
    <property type="term" value="C:external side of plasma membrane"/>
    <property type="evidence" value="ECO:0000314"/>
    <property type="project" value="MGI"/>
</dbReference>
<dbReference type="GO" id="GO:0001650">
    <property type="term" value="C:fibrillar center"/>
    <property type="evidence" value="ECO:0007669"/>
    <property type="project" value="Ensembl"/>
</dbReference>
<dbReference type="GO" id="GO:0043025">
    <property type="term" value="C:neuronal cell body"/>
    <property type="evidence" value="ECO:0000250"/>
    <property type="project" value="BHF-UCL"/>
</dbReference>
<dbReference type="GO" id="GO:0043204">
    <property type="term" value="C:perikaryon"/>
    <property type="evidence" value="ECO:0000250"/>
    <property type="project" value="BHF-UCL"/>
</dbReference>
<dbReference type="GO" id="GO:0048471">
    <property type="term" value="C:perinuclear region of cytoplasm"/>
    <property type="evidence" value="ECO:0000250"/>
    <property type="project" value="BHF-UCL"/>
</dbReference>
<dbReference type="GO" id="GO:0005886">
    <property type="term" value="C:plasma membrane"/>
    <property type="evidence" value="ECO:0000250"/>
    <property type="project" value="UniProtKB"/>
</dbReference>
<dbReference type="GO" id="GO:0016493">
    <property type="term" value="F:C-C chemokine receptor activity"/>
    <property type="evidence" value="ECO:0000314"/>
    <property type="project" value="MGI"/>
</dbReference>
<dbReference type="GO" id="GO:0031727">
    <property type="term" value="F:CCR2 chemokine receptor binding"/>
    <property type="evidence" value="ECO:0007669"/>
    <property type="project" value="Ensembl"/>
</dbReference>
<dbReference type="GO" id="GO:0035716">
    <property type="term" value="F:chemokine (C-C motif) ligand 12 binding"/>
    <property type="evidence" value="ECO:0000353"/>
    <property type="project" value="BHF-UCL"/>
</dbReference>
<dbReference type="GO" id="GO:0035715">
    <property type="term" value="F:chemokine (C-C motif) ligand 2 binding"/>
    <property type="evidence" value="ECO:0000353"/>
    <property type="project" value="BHF-UCL"/>
</dbReference>
<dbReference type="GO" id="GO:0035717">
    <property type="term" value="F:chemokine (C-C motif) ligand 7 binding"/>
    <property type="evidence" value="ECO:0000353"/>
    <property type="project" value="BHF-UCL"/>
</dbReference>
<dbReference type="GO" id="GO:0019955">
    <property type="term" value="F:cytokine binding"/>
    <property type="evidence" value="ECO:0000353"/>
    <property type="project" value="MGI"/>
</dbReference>
<dbReference type="GO" id="GO:0001525">
    <property type="term" value="P:angiogenesis"/>
    <property type="evidence" value="ECO:0000304"/>
    <property type="project" value="BHF-UCL"/>
</dbReference>
<dbReference type="GO" id="GO:0043277">
    <property type="term" value="P:apoptotic cell clearance"/>
    <property type="evidence" value="ECO:0000305"/>
    <property type="project" value="BHF-UCL"/>
</dbReference>
<dbReference type="GO" id="GO:0001974">
    <property type="term" value="P:blood vessel remodeling"/>
    <property type="evidence" value="ECO:0000250"/>
    <property type="project" value="BHF-UCL"/>
</dbReference>
<dbReference type="GO" id="GO:0006968">
    <property type="term" value="P:cellular defense response"/>
    <property type="evidence" value="ECO:0000315"/>
    <property type="project" value="MGI"/>
</dbReference>
<dbReference type="GO" id="GO:0019725">
    <property type="term" value="P:cellular homeostasis"/>
    <property type="evidence" value="ECO:0000314"/>
    <property type="project" value="BHF-UCL"/>
</dbReference>
<dbReference type="GO" id="GO:0070098">
    <property type="term" value="P:chemokine-mediated signaling pathway"/>
    <property type="evidence" value="ECO:0000250"/>
    <property type="project" value="BHF-UCL"/>
</dbReference>
<dbReference type="GO" id="GO:0030097">
    <property type="term" value="P:hemopoiesis"/>
    <property type="evidence" value="ECO:0000315"/>
    <property type="project" value="MGI"/>
</dbReference>
<dbReference type="GO" id="GO:0048873">
    <property type="term" value="P:homeostasis of number of cells within a tissue"/>
    <property type="evidence" value="ECO:0000315"/>
    <property type="project" value="MGI"/>
</dbReference>
<dbReference type="GO" id="GO:0006959">
    <property type="term" value="P:humoral immune response"/>
    <property type="evidence" value="ECO:0000315"/>
    <property type="project" value="MGI"/>
</dbReference>
<dbReference type="GO" id="GO:0006955">
    <property type="term" value="P:immune response"/>
    <property type="evidence" value="ECO:0000315"/>
    <property type="project" value="MGI"/>
</dbReference>
<dbReference type="GO" id="GO:0006954">
    <property type="term" value="P:inflammatory response"/>
    <property type="evidence" value="ECO:0000315"/>
    <property type="project" value="MGI"/>
</dbReference>
<dbReference type="GO" id="GO:0090594">
    <property type="term" value="P:inflammatory response to wounding"/>
    <property type="evidence" value="ECO:0000315"/>
    <property type="project" value="UniProtKB"/>
</dbReference>
<dbReference type="GO" id="GO:0006874">
    <property type="term" value="P:intracellular calcium ion homeostasis"/>
    <property type="evidence" value="ECO:0000250"/>
    <property type="project" value="BHF-UCL"/>
</dbReference>
<dbReference type="GO" id="GO:0061756">
    <property type="term" value="P:leukocyte adhesion to vascular endothelial cell"/>
    <property type="evidence" value="ECO:0000315"/>
    <property type="project" value="MGI"/>
</dbReference>
<dbReference type="GO" id="GO:1905517">
    <property type="term" value="P:macrophage migration"/>
    <property type="evidence" value="ECO:0000315"/>
    <property type="project" value="UniProtKB"/>
</dbReference>
<dbReference type="GO" id="GO:0002548">
    <property type="term" value="P:monocyte chemotaxis"/>
    <property type="evidence" value="ECO:0000315"/>
    <property type="project" value="MGI"/>
</dbReference>
<dbReference type="GO" id="GO:0035696">
    <property type="term" value="P:monocyte extravasation"/>
    <property type="evidence" value="ECO:0000315"/>
    <property type="project" value="UniProtKB"/>
</dbReference>
<dbReference type="GO" id="GO:0016525">
    <property type="term" value="P:negative regulation of angiogenesis"/>
    <property type="evidence" value="ECO:0000315"/>
    <property type="project" value="BHF-UCL"/>
</dbReference>
<dbReference type="GO" id="GO:0043310">
    <property type="term" value="P:negative regulation of eosinophil degranulation"/>
    <property type="evidence" value="ECO:0000315"/>
    <property type="project" value="BHF-UCL"/>
</dbReference>
<dbReference type="GO" id="GO:0002829">
    <property type="term" value="P:negative regulation of type 2 immune response"/>
    <property type="evidence" value="ECO:0000315"/>
    <property type="project" value="BHF-UCL"/>
</dbReference>
<dbReference type="GO" id="GO:0097350">
    <property type="term" value="P:neutrophil clearance"/>
    <property type="evidence" value="ECO:0000315"/>
    <property type="project" value="MGI"/>
</dbReference>
<dbReference type="GO" id="GO:0046641">
    <property type="term" value="P:positive regulation of alpha-beta T cell proliferation"/>
    <property type="evidence" value="ECO:0000315"/>
    <property type="project" value="BHF-UCL"/>
</dbReference>
<dbReference type="GO" id="GO:2000464">
    <property type="term" value="P:positive regulation of astrocyte chemotaxis"/>
    <property type="evidence" value="ECO:0000250"/>
    <property type="project" value="BHF-UCL"/>
</dbReference>
<dbReference type="GO" id="GO:2000451">
    <property type="term" value="P:positive regulation of CD8-positive, alpha-beta T cell extravasation"/>
    <property type="evidence" value="ECO:0000315"/>
    <property type="project" value="BHF-UCL"/>
</dbReference>
<dbReference type="GO" id="GO:0120162">
    <property type="term" value="P:positive regulation of cold-induced thermogenesis"/>
    <property type="evidence" value="ECO:0000315"/>
    <property type="project" value="YuBioLab"/>
</dbReference>
<dbReference type="GO" id="GO:2000473">
    <property type="term" value="P:positive regulation of hematopoietic stem cell migration"/>
    <property type="evidence" value="ECO:0000315"/>
    <property type="project" value="BHF-UCL"/>
</dbReference>
<dbReference type="GO" id="GO:0090265">
    <property type="term" value="P:positive regulation of immune complex clearance by monocytes and macrophages"/>
    <property type="evidence" value="ECO:0000315"/>
    <property type="project" value="BHF-UCL"/>
</dbReference>
<dbReference type="GO" id="GO:0050729">
    <property type="term" value="P:positive regulation of inflammatory response"/>
    <property type="evidence" value="ECO:0000314"/>
    <property type="project" value="BHF-UCL"/>
</dbReference>
<dbReference type="GO" id="GO:0032743">
    <property type="term" value="P:positive regulation of interleukin-2 production"/>
    <property type="evidence" value="ECO:0000315"/>
    <property type="project" value="BHF-UCL"/>
</dbReference>
<dbReference type="GO" id="GO:1903238">
    <property type="term" value="P:positive regulation of leukocyte tethering or rolling"/>
    <property type="evidence" value="ECO:0000315"/>
    <property type="project" value="MGI"/>
</dbReference>
<dbReference type="GO" id="GO:0090026">
    <property type="term" value="P:positive regulation of monocyte chemotaxis"/>
    <property type="evidence" value="ECO:0000315"/>
    <property type="project" value="BHF-UCL"/>
</dbReference>
<dbReference type="GO" id="GO:2000439">
    <property type="term" value="P:positive regulation of monocyte extravasation"/>
    <property type="evidence" value="ECO:0000315"/>
    <property type="project" value="BHF-UCL"/>
</dbReference>
<dbReference type="GO" id="GO:0051968">
    <property type="term" value="P:positive regulation of synaptic transmission, glutamatergic"/>
    <property type="evidence" value="ECO:0000315"/>
    <property type="project" value="UniProtKB"/>
</dbReference>
<dbReference type="GO" id="GO:0050870">
    <property type="term" value="P:positive regulation of T cell activation"/>
    <property type="evidence" value="ECO:0000315"/>
    <property type="project" value="BHF-UCL"/>
</dbReference>
<dbReference type="GO" id="GO:0010820">
    <property type="term" value="P:positive regulation of T cell chemotaxis"/>
    <property type="evidence" value="ECO:0000314"/>
    <property type="project" value="BHF-UCL"/>
</dbReference>
<dbReference type="GO" id="GO:0045627">
    <property type="term" value="P:positive regulation of T-helper 1 cell differentiation"/>
    <property type="evidence" value="ECO:0000305"/>
    <property type="project" value="BHF-UCL"/>
</dbReference>
<dbReference type="GO" id="GO:0002827">
    <property type="term" value="P:positive regulation of T-helper 1 type immune response"/>
    <property type="evidence" value="ECO:0000315"/>
    <property type="project" value="BHF-UCL"/>
</dbReference>
<dbReference type="GO" id="GO:2000412">
    <property type="term" value="P:positive regulation of thymocyte migration"/>
    <property type="evidence" value="ECO:0000315"/>
    <property type="project" value="UniProtKB"/>
</dbReference>
<dbReference type="GO" id="GO:0032760">
    <property type="term" value="P:positive regulation of tumor necrosis factor production"/>
    <property type="evidence" value="ECO:0000315"/>
    <property type="project" value="BHF-UCL"/>
</dbReference>
<dbReference type="GO" id="GO:0032729">
    <property type="term" value="P:positive regulation of type II interferon production"/>
    <property type="evidence" value="ECO:0000315"/>
    <property type="project" value="BHF-UCL"/>
</dbReference>
<dbReference type="GO" id="GO:0050727">
    <property type="term" value="P:regulation of inflammatory response"/>
    <property type="evidence" value="ECO:0000315"/>
    <property type="project" value="UniProtKB"/>
</dbReference>
<dbReference type="GO" id="GO:1905521">
    <property type="term" value="P:regulation of macrophage migration"/>
    <property type="evidence" value="ECO:0000315"/>
    <property type="project" value="MGI"/>
</dbReference>
<dbReference type="GO" id="GO:0071675">
    <property type="term" value="P:regulation of mononuclear cell migration"/>
    <property type="evidence" value="ECO:0000315"/>
    <property type="project" value="MGI"/>
</dbReference>
<dbReference type="GO" id="GO:0002724">
    <property type="term" value="P:regulation of T cell cytokine production"/>
    <property type="evidence" value="ECO:0000315"/>
    <property type="project" value="UniProtKB"/>
</dbReference>
<dbReference type="GO" id="GO:0045580">
    <property type="term" value="P:regulation of T cell differentiation"/>
    <property type="evidence" value="ECO:0000315"/>
    <property type="project" value="UniProtKB"/>
</dbReference>
<dbReference type="GO" id="GO:2000404">
    <property type="term" value="P:regulation of T cell migration"/>
    <property type="evidence" value="ECO:0000315"/>
    <property type="project" value="MGI"/>
</dbReference>
<dbReference type="GO" id="GO:0010574">
    <property type="term" value="P:regulation of vascular endothelial growth factor production"/>
    <property type="evidence" value="ECO:0000315"/>
    <property type="project" value="BHF-UCL"/>
</dbReference>
<dbReference type="GO" id="GO:0019233">
    <property type="term" value="P:sensory perception of pain"/>
    <property type="evidence" value="ECO:0000315"/>
    <property type="project" value="UniProtKB"/>
</dbReference>
<dbReference type="GO" id="GO:0035705">
    <property type="term" value="P:T-helper 17 cell chemotaxis"/>
    <property type="evidence" value="ECO:0000314"/>
    <property type="project" value="BHF-UCL"/>
</dbReference>
<dbReference type="GO" id="GO:0002246">
    <property type="term" value="P:wound healing involved in inflammatory response"/>
    <property type="evidence" value="ECO:0000303"/>
    <property type="project" value="BHF-UCL"/>
</dbReference>
<dbReference type="CDD" id="cd15184">
    <property type="entry name" value="7tmA_CCR5_CCR2"/>
    <property type="match status" value="1"/>
</dbReference>
<dbReference type="FunFam" id="1.20.1070.10:FF:000026">
    <property type="entry name" value="C-C chemokine receptor type 5"/>
    <property type="match status" value="1"/>
</dbReference>
<dbReference type="Gene3D" id="1.20.1070.10">
    <property type="entry name" value="Rhodopsin 7-helix transmembrane proteins"/>
    <property type="match status" value="1"/>
</dbReference>
<dbReference type="InterPro" id="IPR050119">
    <property type="entry name" value="CCR1-9-like"/>
</dbReference>
<dbReference type="InterPro" id="IPR002237">
    <property type="entry name" value="Chemokine_CCR2"/>
</dbReference>
<dbReference type="InterPro" id="IPR000355">
    <property type="entry name" value="Chemokine_rcpt"/>
</dbReference>
<dbReference type="InterPro" id="IPR000276">
    <property type="entry name" value="GPCR_Rhodpsn"/>
</dbReference>
<dbReference type="InterPro" id="IPR017452">
    <property type="entry name" value="GPCR_Rhodpsn_7TM"/>
</dbReference>
<dbReference type="PANTHER" id="PTHR10489:SF928">
    <property type="entry name" value="C-C CHEMOKINE RECEPTOR TYPE 2"/>
    <property type="match status" value="1"/>
</dbReference>
<dbReference type="PANTHER" id="PTHR10489">
    <property type="entry name" value="CELL ADHESION MOLECULE"/>
    <property type="match status" value="1"/>
</dbReference>
<dbReference type="Pfam" id="PF00001">
    <property type="entry name" value="7tm_1"/>
    <property type="match status" value="1"/>
</dbReference>
<dbReference type="PRINTS" id="PR00657">
    <property type="entry name" value="CCCHEMOKINER"/>
</dbReference>
<dbReference type="PRINTS" id="PR01107">
    <property type="entry name" value="CHEMOKINER2"/>
</dbReference>
<dbReference type="PRINTS" id="PR00237">
    <property type="entry name" value="GPCRRHODOPSN"/>
</dbReference>
<dbReference type="SUPFAM" id="SSF81321">
    <property type="entry name" value="Family A G protein-coupled receptor-like"/>
    <property type="match status" value="1"/>
</dbReference>
<dbReference type="PROSITE" id="PS00237">
    <property type="entry name" value="G_PROTEIN_RECEP_F1_1"/>
    <property type="match status" value="1"/>
</dbReference>
<dbReference type="PROSITE" id="PS50262">
    <property type="entry name" value="G_PROTEIN_RECEP_F1_2"/>
    <property type="match status" value="1"/>
</dbReference>